<name>RL17_BUCAP</name>
<organism>
    <name type="scientific">Buchnera aphidicola subsp. Schizaphis graminum (strain Sg)</name>
    <dbReference type="NCBI Taxonomy" id="198804"/>
    <lineage>
        <taxon>Bacteria</taxon>
        <taxon>Pseudomonadati</taxon>
        <taxon>Pseudomonadota</taxon>
        <taxon>Gammaproteobacteria</taxon>
        <taxon>Enterobacterales</taxon>
        <taxon>Erwiniaceae</taxon>
        <taxon>Buchnera</taxon>
    </lineage>
</organism>
<protein>
    <recommendedName>
        <fullName evidence="1">Large ribosomal subunit protein bL17</fullName>
    </recommendedName>
    <alternativeName>
        <fullName evidence="2">50S ribosomal protein L17</fullName>
    </alternativeName>
</protein>
<evidence type="ECO:0000255" key="1">
    <source>
        <dbReference type="HAMAP-Rule" id="MF_01368"/>
    </source>
</evidence>
<evidence type="ECO:0000305" key="2"/>
<proteinExistence type="inferred from homology"/>
<gene>
    <name evidence="1" type="primary">rplQ</name>
    <name type="ordered locus">BUsg_479</name>
</gene>
<sequence length="138" mass="16101">MRHRKIGRKLNCKSDHRNAIFKNMACSLILNEIIKTTLAKAKELRRIVEPMITLSKIDTVAHRRLLFSRIRNNEVIAKLFKKIGPIFYNRSGGYTRILKCGFRFGDKAPMAYIELVDRVRKSKEKKKLSSNNNLIKNK</sequence>
<feature type="chain" id="PRO_0000175518" description="Large ribosomal subunit protein bL17">
    <location>
        <begin position="1"/>
        <end position="138"/>
    </location>
</feature>
<comment type="subunit">
    <text evidence="1">Part of the 50S ribosomal subunit. Contacts protein L32.</text>
</comment>
<comment type="similarity">
    <text evidence="1">Belongs to the bacterial ribosomal protein bL17 family.</text>
</comment>
<dbReference type="EMBL" id="AE013218">
    <property type="protein sequence ID" value="AAM68022.1"/>
    <property type="molecule type" value="Genomic_DNA"/>
</dbReference>
<dbReference type="RefSeq" id="WP_011053988.1">
    <property type="nucleotide sequence ID" value="NC_004061.1"/>
</dbReference>
<dbReference type="SMR" id="Q8K973"/>
<dbReference type="STRING" id="198804.BUsg_479"/>
<dbReference type="GeneID" id="93003954"/>
<dbReference type="KEGG" id="bas:BUsg_479"/>
<dbReference type="eggNOG" id="COG0203">
    <property type="taxonomic scope" value="Bacteria"/>
</dbReference>
<dbReference type="HOGENOM" id="CLU_074407_2_0_6"/>
<dbReference type="Proteomes" id="UP000000416">
    <property type="component" value="Chromosome"/>
</dbReference>
<dbReference type="GO" id="GO:0022625">
    <property type="term" value="C:cytosolic large ribosomal subunit"/>
    <property type="evidence" value="ECO:0007669"/>
    <property type="project" value="TreeGrafter"/>
</dbReference>
<dbReference type="GO" id="GO:0003735">
    <property type="term" value="F:structural constituent of ribosome"/>
    <property type="evidence" value="ECO:0007669"/>
    <property type="project" value="InterPro"/>
</dbReference>
<dbReference type="GO" id="GO:0006412">
    <property type="term" value="P:translation"/>
    <property type="evidence" value="ECO:0007669"/>
    <property type="project" value="UniProtKB-UniRule"/>
</dbReference>
<dbReference type="FunFam" id="3.90.1030.10:FF:000001">
    <property type="entry name" value="50S ribosomal protein L17"/>
    <property type="match status" value="1"/>
</dbReference>
<dbReference type="Gene3D" id="3.90.1030.10">
    <property type="entry name" value="Ribosomal protein L17"/>
    <property type="match status" value="1"/>
</dbReference>
<dbReference type="HAMAP" id="MF_01368">
    <property type="entry name" value="Ribosomal_bL17"/>
    <property type="match status" value="1"/>
</dbReference>
<dbReference type="InterPro" id="IPR000456">
    <property type="entry name" value="Ribosomal_bL17"/>
</dbReference>
<dbReference type="InterPro" id="IPR047859">
    <property type="entry name" value="Ribosomal_bL17_CS"/>
</dbReference>
<dbReference type="InterPro" id="IPR036373">
    <property type="entry name" value="Ribosomal_bL17_sf"/>
</dbReference>
<dbReference type="NCBIfam" id="TIGR00059">
    <property type="entry name" value="L17"/>
    <property type="match status" value="1"/>
</dbReference>
<dbReference type="PANTHER" id="PTHR14413:SF16">
    <property type="entry name" value="LARGE RIBOSOMAL SUBUNIT PROTEIN BL17M"/>
    <property type="match status" value="1"/>
</dbReference>
<dbReference type="PANTHER" id="PTHR14413">
    <property type="entry name" value="RIBOSOMAL PROTEIN L17"/>
    <property type="match status" value="1"/>
</dbReference>
<dbReference type="Pfam" id="PF01196">
    <property type="entry name" value="Ribosomal_L17"/>
    <property type="match status" value="1"/>
</dbReference>
<dbReference type="SUPFAM" id="SSF64263">
    <property type="entry name" value="Prokaryotic ribosomal protein L17"/>
    <property type="match status" value="1"/>
</dbReference>
<dbReference type="PROSITE" id="PS01167">
    <property type="entry name" value="RIBOSOMAL_L17"/>
    <property type="match status" value="1"/>
</dbReference>
<keyword id="KW-0687">Ribonucleoprotein</keyword>
<keyword id="KW-0689">Ribosomal protein</keyword>
<accession>Q8K973</accession>
<reference key="1">
    <citation type="journal article" date="2002" name="Science">
        <title>50 million years of genomic stasis in endosymbiotic bacteria.</title>
        <authorList>
            <person name="Tamas I."/>
            <person name="Klasson L."/>
            <person name="Canbaeck B."/>
            <person name="Naeslund A.K."/>
            <person name="Eriksson A.-S."/>
            <person name="Wernegreen J.J."/>
            <person name="Sandstroem J.P."/>
            <person name="Moran N.A."/>
            <person name="Andersson S.G.E."/>
        </authorList>
    </citation>
    <scope>NUCLEOTIDE SEQUENCE [LARGE SCALE GENOMIC DNA]</scope>
    <source>
        <strain>Sg</strain>
    </source>
</reference>